<keyword id="KW-0007">Acetylation</keyword>
<keyword id="KW-0489">Methyltransferase</keyword>
<keyword id="KW-0506">mRNA capping</keyword>
<keyword id="KW-0507">mRNA processing</keyword>
<keyword id="KW-0539">Nucleus</keyword>
<keyword id="KW-0597">Phosphoprotein</keyword>
<keyword id="KW-1185">Reference proteome</keyword>
<keyword id="KW-0949">S-adenosyl-L-methionine</keyword>
<keyword id="KW-0808">Transferase</keyword>
<organism>
    <name type="scientific">Bos taurus</name>
    <name type="common">Bovine</name>
    <dbReference type="NCBI Taxonomy" id="9913"/>
    <lineage>
        <taxon>Eukaryota</taxon>
        <taxon>Metazoa</taxon>
        <taxon>Chordata</taxon>
        <taxon>Craniata</taxon>
        <taxon>Vertebrata</taxon>
        <taxon>Euteleostomi</taxon>
        <taxon>Mammalia</taxon>
        <taxon>Eutheria</taxon>
        <taxon>Laurasiatheria</taxon>
        <taxon>Artiodactyla</taxon>
        <taxon>Ruminantia</taxon>
        <taxon>Pecora</taxon>
        <taxon>Bovidae</taxon>
        <taxon>Bovinae</taxon>
        <taxon>Bos</taxon>
    </lineage>
</organism>
<comment type="function">
    <text evidence="2">S-adenosyl-L-methionine-dependent methyltransferase that mediates mRNA cap1 2'-O-ribose methylation to the 5'-cap structure of mRNAs. Methylates the ribose of the first nucleotide of a m(7)GpppG-capped mRNA and small nuclear RNA (snRNA) to produce m(7)GpppRm (cap1). Displays a preference for cap0 transcripts. Cap1 modification is linked to higher levels of translation. May be involved in the interferon response pathway.</text>
</comment>
<comment type="catalytic activity">
    <reaction evidence="2">
        <text>a 5'-end (N(7)-methyl 5'-triphosphoguanosine)-ribonucleoside in mRNA + S-adenosyl-L-methionine = a 5'-end (N(7)-methyl 5'-triphosphoguanosine)-(2'-O-methyl-ribonucleoside) in mRNA + S-adenosyl-L-homocysteine + H(+)</text>
        <dbReference type="Rhea" id="RHEA:67020"/>
        <dbReference type="Rhea" id="RHEA-COMP:17167"/>
        <dbReference type="Rhea" id="RHEA-COMP:17168"/>
        <dbReference type="ChEBI" id="CHEBI:15378"/>
        <dbReference type="ChEBI" id="CHEBI:57856"/>
        <dbReference type="ChEBI" id="CHEBI:59789"/>
        <dbReference type="ChEBI" id="CHEBI:156461"/>
        <dbReference type="ChEBI" id="CHEBI:167609"/>
        <dbReference type="EC" id="2.1.1.57"/>
    </reaction>
</comment>
<comment type="subunit">
    <text evidence="2">Interacts with POLR2A (via C-terminus).</text>
</comment>
<comment type="subcellular location">
    <subcellularLocation>
        <location evidence="2">Nucleus</location>
    </subcellularLocation>
</comment>
<protein>
    <recommendedName>
        <fullName>Cap-specific mRNA (nucleoside-2'-O-)-methyltransferase 1</fullName>
        <ecNumber evidence="2">2.1.1.57</ecNumber>
    </recommendedName>
    <alternativeName>
        <fullName>Cap methyltransferase 1</fullName>
    </alternativeName>
    <alternativeName>
        <fullName>Cap1 2'O-ribose methyltransferase 1</fullName>
        <shortName>MTr1</shortName>
    </alternativeName>
    <alternativeName>
        <fullName>FtsJ methyltransferase domain-containing protein 2</fullName>
    </alternativeName>
</protein>
<sequence>MKRRNDSECTAPLKKQKKRVAELALSLSSTSDDEPPSSVNHAAKASATSLSGSDSETEGKQRSSDSFDDAFKADSLVEGTSSRYSMYNSVSQKLMAKMGFKEGEGLGKYSQGRKDIVEASNQKGRRGLGLTLQGFDQELNVNWRDEPEPSACEQVSWFPECTTEIPDTQEMSDWMVVGKRKMIIEDETEFCGEGLLRSVLKCKSVFDVLDGEEMRRARTRANPYEMIRGVFFLNRAAMKMANMDFVFDRMFTNPRDSYGKPLVKDREAELLYFADVCAGPGGFSEYVLWRKRWHAKGFGLTLKGPHDFKLEDFYSASSELFEPYYGEGGIDGDGDITRPENINAFRNFVLDNTDHKGVHFLMADGGFSVEGQENLQEILSKQLLLCQFLMALSVVRTGGHFICKTFDLFTPFSVGLIYLLYCCFERVCLFKPITSRPANSERYVVCKGLKVGIDEVRDYLFSVNIKLNQLRNTDSDVNLVVPLEVIKGDHEFTDYMIRSNEGHCSLQIKALAKIRAFVQDTTLIEPRQAEIRKECLRLWGIPDQARVAPSSTDPKSKFFELIQGTEIDIFSYKPTPLTAKTLEKIRPVLDYRCMVSGSEQKFLIGLGKSQIYTWDGRQSDRWVKLDLKTELPRDTLLSVEIVHELKGEGKAQRKISAIHILDVLVLNGSDVREQHFNQRIQLAEKFVKAVSKPSRPDMNPIRVKEVYRLEEMEKIFVRLEMKIIKGSSGTPKLSYTGRDDRHFVPTGLYIVRTVNEPWTMGFSKSFKRKFFYNKKTKNSTFDLPADAIAPFHICYYGRLFWEWGDGIRVHESQKPQDPDKLSKEDVLSFIQTHSA</sequence>
<proteinExistence type="evidence at transcript level"/>
<reference key="1">
    <citation type="submission" date="2007-02" db="EMBL/GenBank/DDBJ databases">
        <authorList>
            <consortium name="NIH - Mammalian Gene Collection (MGC) project"/>
        </authorList>
    </citation>
    <scope>NUCLEOTIDE SEQUENCE [LARGE SCALE MRNA]</scope>
    <source>
        <strain>Hereford</strain>
        <tissue>Thymus</tissue>
    </source>
</reference>
<name>CMTR1_BOVIN</name>
<accession>A2VE39</accession>
<gene>
    <name type="primary">CMTR1</name>
    <name type="synonym">FTSJD2</name>
</gene>
<feature type="chain" id="PRO_0000399798" description="Cap-specific mRNA (nucleoside-2'-O-)-methyltransferase 1">
    <location>
        <begin position="1"/>
        <end position="835"/>
    </location>
</feature>
<feature type="domain" description="G-patch" evidence="4">
    <location>
        <begin position="87"/>
        <end position="133"/>
    </location>
</feature>
<feature type="domain" description="RrmJ-type SAM-dependent 2'-O-MTase" evidence="7">
    <location>
        <begin position="231"/>
        <end position="450"/>
    </location>
</feature>
<feature type="domain" description="WW" evidence="5">
    <location>
        <begin position="752"/>
        <end position="786"/>
    </location>
</feature>
<feature type="region of interest" description="Disordered" evidence="8">
    <location>
        <begin position="1"/>
        <end position="66"/>
    </location>
</feature>
<feature type="region of interest" description="Interaction with POLR2A" evidence="1">
    <location>
        <begin position="727"/>
        <end position="835"/>
    </location>
</feature>
<feature type="short sequence motif" description="Bipartite nuclear localization signal" evidence="6">
    <location>
        <begin position="2"/>
        <end position="19"/>
    </location>
</feature>
<feature type="compositionally biased region" description="Basic and acidic residues" evidence="8">
    <location>
        <begin position="57"/>
        <end position="66"/>
    </location>
</feature>
<feature type="active site" evidence="2">
    <location>
        <position position="239"/>
    </location>
</feature>
<feature type="active site" evidence="2">
    <location>
        <position position="364"/>
    </location>
</feature>
<feature type="active site" description="Proton acceptor" evidence="7">
    <location>
        <position position="404"/>
    </location>
</feature>
<feature type="binding site" evidence="2">
    <location>
        <begin position="203"/>
        <end position="207"/>
    </location>
    <ligand>
        <name>substrate</name>
    </ligand>
</feature>
<feature type="binding site" evidence="2">
    <location>
        <position position="218"/>
    </location>
    <ligand>
        <name>substrate</name>
    </ligand>
</feature>
<feature type="binding site" evidence="2">
    <location>
        <position position="234"/>
    </location>
    <ligand>
        <name>S-adenosyl-L-methionine</name>
        <dbReference type="ChEBI" id="CHEBI:59789"/>
    </ligand>
</feature>
<feature type="binding site" evidence="2">
    <location>
        <begin position="277"/>
        <end position="283"/>
    </location>
    <ligand>
        <name>S-adenosyl-L-methionine</name>
        <dbReference type="ChEBI" id="CHEBI:59789"/>
    </ligand>
</feature>
<feature type="binding site" evidence="2">
    <location>
        <begin position="335"/>
        <end position="336"/>
    </location>
    <ligand>
        <name>S-adenosyl-L-methionine</name>
        <dbReference type="ChEBI" id="CHEBI:59789"/>
    </ligand>
</feature>
<feature type="binding site" evidence="2">
    <location>
        <begin position="374"/>
        <end position="376"/>
    </location>
    <ligand>
        <name>substrate</name>
    </ligand>
</feature>
<feature type="binding site" evidence="2">
    <location>
        <position position="439"/>
    </location>
    <ligand>
        <name>substrate</name>
    </ligand>
</feature>
<feature type="modified residue" description="Phosphoserine" evidence="3">
    <location>
        <position position="28"/>
    </location>
</feature>
<feature type="modified residue" description="Phosphoserine" evidence="3">
    <location>
        <position position="31"/>
    </location>
</feature>
<feature type="modified residue" description="Phosphoserine" evidence="2">
    <location>
        <position position="53"/>
    </location>
</feature>
<feature type="modified residue" description="Phosphoserine" evidence="2">
    <location>
        <position position="66"/>
    </location>
</feature>
<feature type="modified residue" description="Phosphoserine" evidence="2">
    <location>
        <position position="91"/>
    </location>
</feature>
<feature type="modified residue" description="N6-acetyllysine" evidence="2">
    <location>
        <position position="108"/>
    </location>
</feature>
<evidence type="ECO:0000250" key="1"/>
<evidence type="ECO:0000250" key="2">
    <source>
        <dbReference type="UniProtKB" id="Q8N1G2"/>
    </source>
</evidence>
<evidence type="ECO:0000250" key="3">
    <source>
        <dbReference type="UniProtKB" id="Q9DBC3"/>
    </source>
</evidence>
<evidence type="ECO:0000255" key="4">
    <source>
        <dbReference type="PROSITE-ProRule" id="PRU00092"/>
    </source>
</evidence>
<evidence type="ECO:0000255" key="5">
    <source>
        <dbReference type="PROSITE-ProRule" id="PRU00224"/>
    </source>
</evidence>
<evidence type="ECO:0000255" key="6">
    <source>
        <dbReference type="PROSITE-ProRule" id="PRU00768"/>
    </source>
</evidence>
<evidence type="ECO:0000255" key="7">
    <source>
        <dbReference type="PROSITE-ProRule" id="PRU00945"/>
    </source>
</evidence>
<evidence type="ECO:0000256" key="8">
    <source>
        <dbReference type="SAM" id="MobiDB-lite"/>
    </source>
</evidence>
<dbReference type="EC" id="2.1.1.57" evidence="2"/>
<dbReference type="EMBL" id="BC133559">
    <property type="protein sequence ID" value="AAI33560.1"/>
    <property type="molecule type" value="mRNA"/>
</dbReference>
<dbReference type="RefSeq" id="NP_001075899.1">
    <property type="nucleotide sequence ID" value="NM_001082430.2"/>
</dbReference>
<dbReference type="SMR" id="A2VE39"/>
<dbReference type="FunCoup" id="A2VE39">
    <property type="interactions" value="5013"/>
</dbReference>
<dbReference type="STRING" id="9913.ENSBTAP00000022726"/>
<dbReference type="PaxDb" id="9913-ENSBTAP00000022726"/>
<dbReference type="GeneID" id="509620"/>
<dbReference type="KEGG" id="bta:509620"/>
<dbReference type="CTD" id="23070"/>
<dbReference type="VEuPathDB" id="HostDB:ENSBTAG00000017091"/>
<dbReference type="eggNOG" id="KOG3673">
    <property type="taxonomic scope" value="Eukaryota"/>
</dbReference>
<dbReference type="HOGENOM" id="CLU_011097_0_0_1"/>
<dbReference type="InParanoid" id="A2VE39"/>
<dbReference type="OMA" id="CTLFLCK"/>
<dbReference type="OrthoDB" id="10251234at2759"/>
<dbReference type="TreeFam" id="TF314897"/>
<dbReference type="Proteomes" id="UP000009136">
    <property type="component" value="Chromosome 23"/>
</dbReference>
<dbReference type="Bgee" id="ENSBTAG00000017091">
    <property type="expression patterns" value="Expressed in diaphragm and 106 other cell types or tissues"/>
</dbReference>
<dbReference type="GO" id="GO:0005737">
    <property type="term" value="C:cytoplasm"/>
    <property type="evidence" value="ECO:0000318"/>
    <property type="project" value="GO_Central"/>
</dbReference>
<dbReference type="GO" id="GO:0005634">
    <property type="term" value="C:nucleus"/>
    <property type="evidence" value="ECO:0000250"/>
    <property type="project" value="UniProtKB"/>
</dbReference>
<dbReference type="GO" id="GO:0004483">
    <property type="term" value="F:mRNA (nucleoside-2'-O-)-methyltransferase activity"/>
    <property type="evidence" value="ECO:0000250"/>
    <property type="project" value="UniProtKB"/>
</dbReference>
<dbReference type="GO" id="GO:0003676">
    <property type="term" value="F:nucleic acid binding"/>
    <property type="evidence" value="ECO:0007669"/>
    <property type="project" value="InterPro"/>
</dbReference>
<dbReference type="GO" id="GO:0006370">
    <property type="term" value="P:7-methylguanosine mRNA capping"/>
    <property type="evidence" value="ECO:0000250"/>
    <property type="project" value="UniProtKB"/>
</dbReference>
<dbReference type="GO" id="GO:0032259">
    <property type="term" value="P:methylation"/>
    <property type="evidence" value="ECO:0007669"/>
    <property type="project" value="UniProtKB-KW"/>
</dbReference>
<dbReference type="GO" id="GO:0006397">
    <property type="term" value="P:mRNA processing"/>
    <property type="evidence" value="ECO:0000250"/>
    <property type="project" value="UniProtKB"/>
</dbReference>
<dbReference type="FunFam" id="3.30.470.30:FF:000006">
    <property type="entry name" value="Cap methyltransferase 1"/>
    <property type="match status" value="1"/>
</dbReference>
<dbReference type="FunFam" id="3.40.50.12760:FF:000001">
    <property type="entry name" value="Cap methyltransferase 1"/>
    <property type="match status" value="1"/>
</dbReference>
<dbReference type="Gene3D" id="3.40.50.12760">
    <property type="match status" value="1"/>
</dbReference>
<dbReference type="Gene3D" id="3.30.470.30">
    <property type="entry name" value="DNA ligase/mRNA capping enzyme"/>
    <property type="match status" value="1"/>
</dbReference>
<dbReference type="InterPro" id="IPR000467">
    <property type="entry name" value="G_patch_dom"/>
</dbReference>
<dbReference type="InterPro" id="IPR050851">
    <property type="entry name" value="mRNA_Cap_2O-Ribose_MeTrfase"/>
</dbReference>
<dbReference type="InterPro" id="IPR002877">
    <property type="entry name" value="RNA_MeTrfase_FtsJ_dom"/>
</dbReference>
<dbReference type="InterPro" id="IPR025816">
    <property type="entry name" value="RrmJ-type_MeTrfase"/>
</dbReference>
<dbReference type="InterPro" id="IPR029063">
    <property type="entry name" value="SAM-dependent_MTases_sf"/>
</dbReference>
<dbReference type="InterPro" id="IPR001202">
    <property type="entry name" value="WW_dom"/>
</dbReference>
<dbReference type="PANTHER" id="PTHR16121:SF0">
    <property type="entry name" value="CAP-SPECIFIC MRNA (NUCLEOSIDE-2'-O-)-METHYLTRANSFERASE 1"/>
    <property type="match status" value="1"/>
</dbReference>
<dbReference type="PANTHER" id="PTHR16121">
    <property type="entry name" value="CAP-SPECIFIC MRNA (NUCLEOSIDE-2'-O-)-METHYLTRANSFERASE 1-RELATED"/>
    <property type="match status" value="1"/>
</dbReference>
<dbReference type="Pfam" id="PF01728">
    <property type="entry name" value="FtsJ"/>
    <property type="match status" value="1"/>
</dbReference>
<dbReference type="Pfam" id="PF01585">
    <property type="entry name" value="G-patch"/>
    <property type="match status" value="1"/>
</dbReference>
<dbReference type="SMART" id="SM00443">
    <property type="entry name" value="G_patch"/>
    <property type="match status" value="1"/>
</dbReference>
<dbReference type="SMART" id="SM00456">
    <property type="entry name" value="WW"/>
    <property type="match status" value="1"/>
</dbReference>
<dbReference type="SUPFAM" id="SSF53335">
    <property type="entry name" value="S-adenosyl-L-methionine-dependent methyltransferases"/>
    <property type="match status" value="1"/>
</dbReference>
<dbReference type="PROSITE" id="PS50174">
    <property type="entry name" value="G_PATCH"/>
    <property type="match status" value="1"/>
</dbReference>
<dbReference type="PROSITE" id="PS51613">
    <property type="entry name" value="SAM_MT_RRMJ"/>
    <property type="match status" value="1"/>
</dbReference>
<dbReference type="PROSITE" id="PS01159">
    <property type="entry name" value="WW_DOMAIN_1"/>
    <property type="match status" value="1"/>
</dbReference>
<dbReference type="PROSITE" id="PS50020">
    <property type="entry name" value="WW_DOMAIN_2"/>
    <property type="match status" value="1"/>
</dbReference>